<feature type="chain" id="PRO_0000183855" description="Cytochrome c oxidase subunit 3">
    <location>
        <begin position="1" status="less than"/>
        <end position="147"/>
    </location>
</feature>
<feature type="transmembrane region" description="Helical" evidence="2">
    <location>
        <begin position="13"/>
        <end position="33"/>
    </location>
</feature>
<feature type="transmembrane region" description="Helical" evidence="2">
    <location>
        <begin position="48"/>
        <end position="68"/>
    </location>
</feature>
<feature type="transmembrane region" description="Helical" evidence="2">
    <location>
        <begin position="83"/>
        <end position="103"/>
    </location>
</feature>
<feature type="transmembrane region" description="Helical" evidence="2">
    <location>
        <begin position="125"/>
        <end position="145"/>
    </location>
</feature>
<feature type="non-terminal residue">
    <location>
        <position position="1"/>
    </location>
</feature>
<reference key="1">
    <citation type="journal article" date="1988" name="Virology">
        <title>Regulation of host RNA levels during baculovirus infection.</title>
        <authorList>
            <person name="Ooi B.G."/>
            <person name="Miller L.K."/>
        </authorList>
    </citation>
    <scope>NUCLEOTIDE SEQUENCE [MRNA]</scope>
</reference>
<keyword id="KW-0472">Membrane</keyword>
<keyword id="KW-0496">Mitochondrion</keyword>
<keyword id="KW-0999">Mitochondrion inner membrane</keyword>
<keyword id="KW-1278">Translocase</keyword>
<keyword id="KW-0812">Transmembrane</keyword>
<keyword id="KW-1133">Transmembrane helix</keyword>
<proteinExistence type="evidence at transcript level"/>
<evidence type="ECO:0000250" key="1">
    <source>
        <dbReference type="UniProtKB" id="P00420"/>
    </source>
</evidence>
<evidence type="ECO:0000255" key="2"/>
<evidence type="ECO:0000305" key="3"/>
<organism>
    <name type="scientific">Spodoptera frugiperda</name>
    <name type="common">Fall armyworm</name>
    <dbReference type="NCBI Taxonomy" id="7108"/>
    <lineage>
        <taxon>Eukaryota</taxon>
        <taxon>Metazoa</taxon>
        <taxon>Ecdysozoa</taxon>
        <taxon>Arthropoda</taxon>
        <taxon>Hexapoda</taxon>
        <taxon>Insecta</taxon>
        <taxon>Pterygota</taxon>
        <taxon>Neoptera</taxon>
        <taxon>Endopterygota</taxon>
        <taxon>Lepidoptera</taxon>
        <taxon>Glossata</taxon>
        <taxon>Ditrysia</taxon>
        <taxon>Noctuoidea</taxon>
        <taxon>Noctuidae</taxon>
        <taxon>Amphipyrinae</taxon>
        <taxon>Spodoptera</taxon>
    </lineage>
</organism>
<comment type="function">
    <text evidence="1">Component of the cytochrome c oxidase, the last enzyme in the mitochondrial electron transport chain which drives oxidative phosphorylation. The respiratory chain contains 3 multisubunit complexes succinate dehydrogenase (complex II, CII), ubiquinol-cytochrome c oxidoreductase (cytochrome b-c1 complex, complex III, CIII) and cytochrome c oxidase (complex IV, CIV), that cooperate to transfer electrons derived from NADH and succinate to molecular oxygen, creating an electrochemical gradient over the inner membrane that drives transmembrane transport and the ATP synthase. Cytochrome c oxidase is the component of the respiratory chain that catalyzes the reduction of oxygen to water. Electrons originating from reduced cytochrome c in the intermembrane space (IMS) are transferred via the dinuclear copper A center (CU(A)) of subunit 2 and heme A of subunit 1 to the active site in subunit 1, a binuclear center (BNC) formed by heme A3 and copper B (CU(B)). The BNC reduces molecular oxygen to 2 water molecules using 4 electrons from cytochrome c in the IMS and 4 protons from the mitochondrial matrix.</text>
</comment>
<comment type="catalytic activity">
    <reaction evidence="1">
        <text>4 Fe(II)-[cytochrome c] + O2 + 8 H(+)(in) = 4 Fe(III)-[cytochrome c] + 2 H2O + 4 H(+)(out)</text>
        <dbReference type="Rhea" id="RHEA:11436"/>
        <dbReference type="Rhea" id="RHEA-COMP:10350"/>
        <dbReference type="Rhea" id="RHEA-COMP:14399"/>
        <dbReference type="ChEBI" id="CHEBI:15377"/>
        <dbReference type="ChEBI" id="CHEBI:15378"/>
        <dbReference type="ChEBI" id="CHEBI:15379"/>
        <dbReference type="ChEBI" id="CHEBI:29033"/>
        <dbReference type="ChEBI" id="CHEBI:29034"/>
        <dbReference type="EC" id="7.1.1.9"/>
    </reaction>
    <physiologicalReaction direction="left-to-right" evidence="1">
        <dbReference type="Rhea" id="RHEA:11437"/>
    </physiologicalReaction>
</comment>
<comment type="subunit">
    <text evidence="1">Component of the cytochrome c oxidase (complex IV, CIV), a multisubunit enzyme composed of a catalytic core of 3 subunits and several supernumerary subunits. The complex exists as a monomer or a dimer and forms supercomplexes (SCs) in the inner mitochondrial membrane with ubiquinol-cytochrome c oxidoreductase (cytochrome b-c1 complex, complex III, CIII).</text>
</comment>
<comment type="subcellular location">
    <subcellularLocation>
        <location evidence="1">Mitochondrion inner membrane</location>
        <topology evidence="1">Multi-pass membrane protein</topology>
    </subcellularLocation>
</comment>
<comment type="similarity">
    <text evidence="3">Belongs to the cytochrome c oxidase subunit 3 family.</text>
</comment>
<name>COX3_SPOFR</name>
<geneLocation type="mitochondrion"/>
<dbReference type="EC" id="7.1.1.9"/>
<dbReference type="EMBL" id="M22051">
    <property type="protein sequence ID" value="AAA68818.1"/>
    <property type="molecule type" value="mRNA"/>
</dbReference>
<dbReference type="SMR" id="Q35826"/>
<dbReference type="OrthoDB" id="10050457at2759"/>
<dbReference type="Proteomes" id="UP000829999">
    <property type="component" value="Mitochondrion MT"/>
</dbReference>
<dbReference type="GO" id="GO:0005743">
    <property type="term" value="C:mitochondrial inner membrane"/>
    <property type="evidence" value="ECO:0007669"/>
    <property type="project" value="UniProtKB-SubCell"/>
</dbReference>
<dbReference type="GO" id="GO:0004129">
    <property type="term" value="F:cytochrome-c oxidase activity"/>
    <property type="evidence" value="ECO:0007669"/>
    <property type="project" value="UniProtKB-EC"/>
</dbReference>
<dbReference type="GO" id="GO:0006123">
    <property type="term" value="P:mitochondrial electron transport, cytochrome c to oxygen"/>
    <property type="evidence" value="ECO:0007669"/>
    <property type="project" value="TreeGrafter"/>
</dbReference>
<dbReference type="CDD" id="cd01665">
    <property type="entry name" value="Cyt_c_Oxidase_III"/>
    <property type="match status" value="1"/>
</dbReference>
<dbReference type="Gene3D" id="1.20.120.80">
    <property type="entry name" value="Cytochrome c oxidase, subunit III, four-helix bundle"/>
    <property type="match status" value="1"/>
</dbReference>
<dbReference type="InterPro" id="IPR024791">
    <property type="entry name" value="Cyt_c/ubiquinol_Oxase_su3"/>
</dbReference>
<dbReference type="InterPro" id="IPR033945">
    <property type="entry name" value="Cyt_c_oxase_su3_dom"/>
</dbReference>
<dbReference type="InterPro" id="IPR000298">
    <property type="entry name" value="Cyt_c_oxidase-like_su3"/>
</dbReference>
<dbReference type="InterPro" id="IPR035973">
    <property type="entry name" value="Cyt_c_oxidase_su3-like_sf"/>
</dbReference>
<dbReference type="InterPro" id="IPR013833">
    <property type="entry name" value="Cyt_c_oxidase_su3_a-hlx"/>
</dbReference>
<dbReference type="PANTHER" id="PTHR11403:SF7">
    <property type="entry name" value="CYTOCHROME C OXIDASE SUBUNIT 3"/>
    <property type="match status" value="1"/>
</dbReference>
<dbReference type="PANTHER" id="PTHR11403">
    <property type="entry name" value="CYTOCHROME C OXIDASE SUBUNIT III"/>
    <property type="match status" value="1"/>
</dbReference>
<dbReference type="Pfam" id="PF00510">
    <property type="entry name" value="COX3"/>
    <property type="match status" value="1"/>
</dbReference>
<dbReference type="SUPFAM" id="SSF81452">
    <property type="entry name" value="Cytochrome c oxidase subunit III-like"/>
    <property type="match status" value="1"/>
</dbReference>
<dbReference type="PROSITE" id="PS50253">
    <property type="entry name" value="COX3"/>
    <property type="match status" value="1"/>
</dbReference>
<sequence>MWPPTSITPFNPFQIPLLNTIILISSGVSVTWAHHAIMENNNSQMTQGLFITIILGIYFTILQAYEYFEAPFTIADSIYGSTFFMATGFHGLHVIIGTLFLLICLIRHLNNHFSSNHHFGFEAAAWYWHFVDVVWLFLYISIYWWGN</sequence>
<protein>
    <recommendedName>
        <fullName>Cytochrome c oxidase subunit 3</fullName>
        <ecNumber>7.1.1.9</ecNumber>
    </recommendedName>
    <alternativeName>
        <fullName>Cytochrome c oxidase polypeptide III</fullName>
    </alternativeName>
</protein>
<accession>Q35826</accession>
<gene>
    <name type="primary">COIII</name>
</gene>